<comment type="function">
    <text evidence="1">Plays an important role in the de novo pathway of purine nucleotide biosynthesis. Catalyzes the first committed step in the biosynthesis of AMP from IMP.</text>
</comment>
<comment type="catalytic activity">
    <reaction evidence="1">
        <text>IMP + L-aspartate + GTP = N(6)-(1,2-dicarboxyethyl)-AMP + GDP + phosphate + 2 H(+)</text>
        <dbReference type="Rhea" id="RHEA:15753"/>
        <dbReference type="ChEBI" id="CHEBI:15378"/>
        <dbReference type="ChEBI" id="CHEBI:29991"/>
        <dbReference type="ChEBI" id="CHEBI:37565"/>
        <dbReference type="ChEBI" id="CHEBI:43474"/>
        <dbReference type="ChEBI" id="CHEBI:57567"/>
        <dbReference type="ChEBI" id="CHEBI:58053"/>
        <dbReference type="ChEBI" id="CHEBI:58189"/>
        <dbReference type="EC" id="6.3.4.4"/>
    </reaction>
</comment>
<comment type="cofactor">
    <cofactor evidence="1">
        <name>Mg(2+)</name>
        <dbReference type="ChEBI" id="CHEBI:18420"/>
    </cofactor>
    <text evidence="1">Binds 1 Mg(2+) ion per subunit.</text>
</comment>
<comment type="pathway">
    <text evidence="1">Purine metabolism; AMP biosynthesis via de novo pathway; AMP from IMP: step 1/2.</text>
</comment>
<comment type="subunit">
    <text evidence="1">Homodimer.</text>
</comment>
<comment type="subcellular location">
    <subcellularLocation>
        <location evidence="1">Cytoplasm</location>
    </subcellularLocation>
</comment>
<comment type="similarity">
    <text evidence="1">Belongs to the adenylosuccinate synthetase family.</text>
</comment>
<reference key="1">
    <citation type="journal article" date="2003" name="Proc. Natl. Acad. Sci. U.S.A.">
        <title>The complete genome sequence of the Arabidopsis and tomato pathogen Pseudomonas syringae pv. tomato DC3000.</title>
        <authorList>
            <person name="Buell C.R."/>
            <person name="Joardar V."/>
            <person name="Lindeberg M."/>
            <person name="Selengut J."/>
            <person name="Paulsen I.T."/>
            <person name="Gwinn M.L."/>
            <person name="Dodson R.J."/>
            <person name="DeBoy R.T."/>
            <person name="Durkin A.S."/>
            <person name="Kolonay J.F."/>
            <person name="Madupu R."/>
            <person name="Daugherty S.C."/>
            <person name="Brinkac L.M."/>
            <person name="Beanan M.J."/>
            <person name="Haft D.H."/>
            <person name="Nelson W.C."/>
            <person name="Davidsen T.M."/>
            <person name="Zafar N."/>
            <person name="Zhou L."/>
            <person name="Liu J."/>
            <person name="Yuan Q."/>
            <person name="Khouri H.M."/>
            <person name="Fedorova N.B."/>
            <person name="Tran B."/>
            <person name="Russell D."/>
            <person name="Berry K.J."/>
            <person name="Utterback T.R."/>
            <person name="Van Aken S.E."/>
            <person name="Feldblyum T.V."/>
            <person name="D'Ascenzo M."/>
            <person name="Deng W.-L."/>
            <person name="Ramos A.R."/>
            <person name="Alfano J.R."/>
            <person name="Cartinhour S."/>
            <person name="Chatterjee A.K."/>
            <person name="Delaney T.P."/>
            <person name="Lazarowitz S.G."/>
            <person name="Martin G.B."/>
            <person name="Schneider D.J."/>
            <person name="Tang X."/>
            <person name="Bender C.L."/>
            <person name="White O."/>
            <person name="Fraser C.M."/>
            <person name="Collmer A."/>
        </authorList>
    </citation>
    <scope>NUCLEOTIDE SEQUENCE [LARGE SCALE GENOMIC DNA]</scope>
    <source>
        <strain>ATCC BAA-871 / DC3000</strain>
    </source>
</reference>
<dbReference type="EC" id="6.3.4.4" evidence="1"/>
<dbReference type="EMBL" id="AE016853">
    <property type="protein sequence ID" value="AAO58365.1"/>
    <property type="molecule type" value="Genomic_DNA"/>
</dbReference>
<dbReference type="RefSeq" id="NP_794670.1">
    <property type="nucleotide sequence ID" value="NC_004578.1"/>
</dbReference>
<dbReference type="RefSeq" id="WP_003422343.1">
    <property type="nucleotide sequence ID" value="NC_004578.1"/>
</dbReference>
<dbReference type="SMR" id="Q87VJ9"/>
<dbReference type="STRING" id="223283.PSPTO_4937"/>
<dbReference type="KEGG" id="pst:PSPTO_4937"/>
<dbReference type="PATRIC" id="fig|223283.9.peg.5051"/>
<dbReference type="eggNOG" id="COG0104">
    <property type="taxonomic scope" value="Bacteria"/>
</dbReference>
<dbReference type="HOGENOM" id="CLU_029848_0_0_6"/>
<dbReference type="OrthoDB" id="9807553at2"/>
<dbReference type="PhylomeDB" id="Q87VJ9"/>
<dbReference type="UniPathway" id="UPA00075">
    <property type="reaction ID" value="UER00335"/>
</dbReference>
<dbReference type="Proteomes" id="UP000002515">
    <property type="component" value="Chromosome"/>
</dbReference>
<dbReference type="GO" id="GO:0005737">
    <property type="term" value="C:cytoplasm"/>
    <property type="evidence" value="ECO:0007669"/>
    <property type="project" value="UniProtKB-SubCell"/>
</dbReference>
<dbReference type="GO" id="GO:0004019">
    <property type="term" value="F:adenylosuccinate synthase activity"/>
    <property type="evidence" value="ECO:0007669"/>
    <property type="project" value="UniProtKB-UniRule"/>
</dbReference>
<dbReference type="GO" id="GO:0005525">
    <property type="term" value="F:GTP binding"/>
    <property type="evidence" value="ECO:0007669"/>
    <property type="project" value="UniProtKB-UniRule"/>
</dbReference>
<dbReference type="GO" id="GO:0000287">
    <property type="term" value="F:magnesium ion binding"/>
    <property type="evidence" value="ECO:0007669"/>
    <property type="project" value="UniProtKB-UniRule"/>
</dbReference>
<dbReference type="GO" id="GO:0044208">
    <property type="term" value="P:'de novo' AMP biosynthetic process"/>
    <property type="evidence" value="ECO:0007669"/>
    <property type="project" value="UniProtKB-UniRule"/>
</dbReference>
<dbReference type="GO" id="GO:0046040">
    <property type="term" value="P:IMP metabolic process"/>
    <property type="evidence" value="ECO:0007669"/>
    <property type="project" value="TreeGrafter"/>
</dbReference>
<dbReference type="CDD" id="cd03108">
    <property type="entry name" value="AdSS"/>
    <property type="match status" value="1"/>
</dbReference>
<dbReference type="FunFam" id="1.10.300.10:FF:000001">
    <property type="entry name" value="Adenylosuccinate synthetase"/>
    <property type="match status" value="1"/>
</dbReference>
<dbReference type="FunFam" id="3.90.170.10:FF:000001">
    <property type="entry name" value="Adenylosuccinate synthetase"/>
    <property type="match status" value="1"/>
</dbReference>
<dbReference type="Gene3D" id="3.40.440.10">
    <property type="entry name" value="Adenylosuccinate Synthetase, subunit A, domain 1"/>
    <property type="match status" value="1"/>
</dbReference>
<dbReference type="Gene3D" id="1.10.300.10">
    <property type="entry name" value="Adenylosuccinate Synthetase, subunit A, domain 2"/>
    <property type="match status" value="1"/>
</dbReference>
<dbReference type="Gene3D" id="3.90.170.10">
    <property type="entry name" value="Adenylosuccinate Synthetase, subunit A, domain 3"/>
    <property type="match status" value="1"/>
</dbReference>
<dbReference type="HAMAP" id="MF_00011">
    <property type="entry name" value="Adenylosucc_synth"/>
    <property type="match status" value="1"/>
</dbReference>
<dbReference type="InterPro" id="IPR018220">
    <property type="entry name" value="Adenylosuccin_syn_GTP-bd"/>
</dbReference>
<dbReference type="InterPro" id="IPR033128">
    <property type="entry name" value="Adenylosuccin_syn_Lys_AS"/>
</dbReference>
<dbReference type="InterPro" id="IPR042109">
    <property type="entry name" value="Adenylosuccinate_synth_dom1"/>
</dbReference>
<dbReference type="InterPro" id="IPR042110">
    <property type="entry name" value="Adenylosuccinate_synth_dom2"/>
</dbReference>
<dbReference type="InterPro" id="IPR042111">
    <property type="entry name" value="Adenylosuccinate_synth_dom3"/>
</dbReference>
<dbReference type="InterPro" id="IPR001114">
    <property type="entry name" value="Adenylosuccinate_synthetase"/>
</dbReference>
<dbReference type="InterPro" id="IPR027417">
    <property type="entry name" value="P-loop_NTPase"/>
</dbReference>
<dbReference type="NCBIfam" id="NF002223">
    <property type="entry name" value="PRK01117.1"/>
    <property type="match status" value="1"/>
</dbReference>
<dbReference type="NCBIfam" id="TIGR00184">
    <property type="entry name" value="purA"/>
    <property type="match status" value="1"/>
</dbReference>
<dbReference type="PANTHER" id="PTHR11846">
    <property type="entry name" value="ADENYLOSUCCINATE SYNTHETASE"/>
    <property type="match status" value="1"/>
</dbReference>
<dbReference type="PANTHER" id="PTHR11846:SF0">
    <property type="entry name" value="ADENYLOSUCCINATE SYNTHETASE"/>
    <property type="match status" value="1"/>
</dbReference>
<dbReference type="Pfam" id="PF00709">
    <property type="entry name" value="Adenylsucc_synt"/>
    <property type="match status" value="1"/>
</dbReference>
<dbReference type="SMART" id="SM00788">
    <property type="entry name" value="Adenylsucc_synt"/>
    <property type="match status" value="1"/>
</dbReference>
<dbReference type="SUPFAM" id="SSF52540">
    <property type="entry name" value="P-loop containing nucleoside triphosphate hydrolases"/>
    <property type="match status" value="1"/>
</dbReference>
<dbReference type="PROSITE" id="PS01266">
    <property type="entry name" value="ADENYLOSUCCIN_SYN_1"/>
    <property type="match status" value="1"/>
</dbReference>
<dbReference type="PROSITE" id="PS00513">
    <property type="entry name" value="ADENYLOSUCCIN_SYN_2"/>
    <property type="match status" value="1"/>
</dbReference>
<organism>
    <name type="scientific">Pseudomonas syringae pv. tomato (strain ATCC BAA-871 / DC3000)</name>
    <dbReference type="NCBI Taxonomy" id="223283"/>
    <lineage>
        <taxon>Bacteria</taxon>
        <taxon>Pseudomonadati</taxon>
        <taxon>Pseudomonadota</taxon>
        <taxon>Gammaproteobacteria</taxon>
        <taxon>Pseudomonadales</taxon>
        <taxon>Pseudomonadaceae</taxon>
        <taxon>Pseudomonas</taxon>
    </lineage>
</organism>
<gene>
    <name evidence="1" type="primary">purA</name>
    <name type="ordered locus">PSPTO_4937</name>
</gene>
<feature type="chain" id="PRO_0000095215" description="Adenylosuccinate synthetase">
    <location>
        <begin position="1"/>
        <end position="430"/>
    </location>
</feature>
<feature type="active site" description="Proton acceptor" evidence="1">
    <location>
        <position position="14"/>
    </location>
</feature>
<feature type="active site" description="Proton donor" evidence="1">
    <location>
        <position position="42"/>
    </location>
</feature>
<feature type="binding site" evidence="1">
    <location>
        <begin position="13"/>
        <end position="19"/>
    </location>
    <ligand>
        <name>GTP</name>
        <dbReference type="ChEBI" id="CHEBI:37565"/>
    </ligand>
</feature>
<feature type="binding site" description="in other chain" evidence="1">
    <location>
        <begin position="14"/>
        <end position="17"/>
    </location>
    <ligand>
        <name>IMP</name>
        <dbReference type="ChEBI" id="CHEBI:58053"/>
        <note>ligand shared between dimeric partners</note>
    </ligand>
</feature>
<feature type="binding site" evidence="1">
    <location>
        <position position="14"/>
    </location>
    <ligand>
        <name>Mg(2+)</name>
        <dbReference type="ChEBI" id="CHEBI:18420"/>
    </ligand>
</feature>
<feature type="binding site" description="in other chain" evidence="1">
    <location>
        <begin position="39"/>
        <end position="42"/>
    </location>
    <ligand>
        <name>IMP</name>
        <dbReference type="ChEBI" id="CHEBI:58053"/>
        <note>ligand shared between dimeric partners</note>
    </ligand>
</feature>
<feature type="binding site" evidence="1">
    <location>
        <begin position="41"/>
        <end position="43"/>
    </location>
    <ligand>
        <name>GTP</name>
        <dbReference type="ChEBI" id="CHEBI:37565"/>
    </ligand>
</feature>
<feature type="binding site" evidence="1">
    <location>
        <position position="41"/>
    </location>
    <ligand>
        <name>Mg(2+)</name>
        <dbReference type="ChEBI" id="CHEBI:18420"/>
    </ligand>
</feature>
<feature type="binding site" description="in other chain" evidence="1">
    <location>
        <position position="130"/>
    </location>
    <ligand>
        <name>IMP</name>
        <dbReference type="ChEBI" id="CHEBI:58053"/>
        <note>ligand shared between dimeric partners</note>
    </ligand>
</feature>
<feature type="binding site" evidence="1">
    <location>
        <position position="144"/>
    </location>
    <ligand>
        <name>IMP</name>
        <dbReference type="ChEBI" id="CHEBI:58053"/>
        <note>ligand shared between dimeric partners</note>
    </ligand>
</feature>
<feature type="binding site" description="in other chain" evidence="1">
    <location>
        <position position="225"/>
    </location>
    <ligand>
        <name>IMP</name>
        <dbReference type="ChEBI" id="CHEBI:58053"/>
        <note>ligand shared between dimeric partners</note>
    </ligand>
</feature>
<feature type="binding site" description="in other chain" evidence="1">
    <location>
        <position position="240"/>
    </location>
    <ligand>
        <name>IMP</name>
        <dbReference type="ChEBI" id="CHEBI:58053"/>
        <note>ligand shared between dimeric partners</note>
    </ligand>
</feature>
<feature type="binding site" evidence="1">
    <location>
        <begin position="300"/>
        <end position="306"/>
    </location>
    <ligand>
        <name>substrate</name>
    </ligand>
</feature>
<feature type="binding site" description="in other chain" evidence="1">
    <location>
        <position position="304"/>
    </location>
    <ligand>
        <name>IMP</name>
        <dbReference type="ChEBI" id="CHEBI:58053"/>
        <note>ligand shared between dimeric partners</note>
    </ligand>
</feature>
<feature type="binding site" evidence="1">
    <location>
        <position position="306"/>
    </location>
    <ligand>
        <name>GTP</name>
        <dbReference type="ChEBI" id="CHEBI:37565"/>
    </ligand>
</feature>
<feature type="binding site" evidence="1">
    <location>
        <begin position="332"/>
        <end position="334"/>
    </location>
    <ligand>
        <name>GTP</name>
        <dbReference type="ChEBI" id="CHEBI:37565"/>
    </ligand>
</feature>
<feature type="binding site" evidence="1">
    <location>
        <begin position="414"/>
        <end position="416"/>
    </location>
    <ligand>
        <name>GTP</name>
        <dbReference type="ChEBI" id="CHEBI:37565"/>
    </ligand>
</feature>
<evidence type="ECO:0000255" key="1">
    <source>
        <dbReference type="HAMAP-Rule" id="MF_00011"/>
    </source>
</evidence>
<accession>Q87VJ9</accession>
<sequence>MGKNVVVLGTQWGDEGKGKIVDLLTEHATAVVRYQGGHNAGHTLVIDGEKTVLHLIPSGVLREGVQCLIGNGVVVAPDALLREIIKLEEKGIPVRERLRISPSCPLILSYHVALDQAREKARGEFKIGTTGRGIGPAYEDKVARRGLRIGDLFHRERFAAKLGELLDYHNFVLVNYYKEPAIDFQKTLDECMEYADMLKPLMLDVTAALHEMRRDGKDIMFEGAQGSLLDIDHGTYPYVTSSNTTAGGIATGSGFGPMYLDYILGITKAYTTRVGSGPFPTELFDDVGAFLAKRGHEFGATTGRARRCGWFDAVILRRAIEINSISGLCLTKLDVLDGLETINICIGYENEEGAVIDAPTDADSYLGLRPVYEEMPGWSESTLGAKTLEELPAAARAYIKRVEELVGAPIDIISTGPDRNETIVLRHPFG</sequence>
<protein>
    <recommendedName>
        <fullName evidence="1">Adenylosuccinate synthetase</fullName>
        <shortName evidence="1">AMPSase</shortName>
        <shortName evidence="1">AdSS</shortName>
        <ecNumber evidence="1">6.3.4.4</ecNumber>
    </recommendedName>
    <alternativeName>
        <fullName evidence="1">IMP--aspartate ligase</fullName>
    </alternativeName>
</protein>
<name>PURA_PSESM</name>
<proteinExistence type="inferred from homology"/>
<keyword id="KW-0963">Cytoplasm</keyword>
<keyword id="KW-0342">GTP-binding</keyword>
<keyword id="KW-0436">Ligase</keyword>
<keyword id="KW-0460">Magnesium</keyword>
<keyword id="KW-0479">Metal-binding</keyword>
<keyword id="KW-0547">Nucleotide-binding</keyword>
<keyword id="KW-0658">Purine biosynthesis</keyword>
<keyword id="KW-1185">Reference proteome</keyword>